<comment type="function">
    <text evidence="1">Functions in the biosynthesis of branched-chain amino acids. Catalyzes the dehydration of (2R,3R)-2,3-dihydroxy-3-methylpentanoate (2,3-dihydroxy-3-methylvalerate) into 2-oxo-3-methylpentanoate (2-oxo-3-methylvalerate) and of (2R)-2,3-dihydroxy-3-methylbutanoate (2,3-dihydroxyisovalerate) into 2-oxo-3-methylbutanoate (2-oxoisovalerate), the penultimate precursor to L-isoleucine and L-valine, respectively.</text>
</comment>
<comment type="catalytic activity">
    <reaction evidence="1">
        <text>(2R)-2,3-dihydroxy-3-methylbutanoate = 3-methyl-2-oxobutanoate + H2O</text>
        <dbReference type="Rhea" id="RHEA:24809"/>
        <dbReference type="ChEBI" id="CHEBI:11851"/>
        <dbReference type="ChEBI" id="CHEBI:15377"/>
        <dbReference type="ChEBI" id="CHEBI:49072"/>
        <dbReference type="EC" id="4.2.1.9"/>
    </reaction>
    <physiologicalReaction direction="left-to-right" evidence="1">
        <dbReference type="Rhea" id="RHEA:24810"/>
    </physiologicalReaction>
</comment>
<comment type="catalytic activity">
    <reaction evidence="1">
        <text>(2R,3R)-2,3-dihydroxy-3-methylpentanoate = (S)-3-methyl-2-oxopentanoate + H2O</text>
        <dbReference type="Rhea" id="RHEA:27694"/>
        <dbReference type="ChEBI" id="CHEBI:15377"/>
        <dbReference type="ChEBI" id="CHEBI:35146"/>
        <dbReference type="ChEBI" id="CHEBI:49258"/>
        <dbReference type="EC" id="4.2.1.9"/>
    </reaction>
    <physiologicalReaction direction="left-to-right" evidence="1">
        <dbReference type="Rhea" id="RHEA:27695"/>
    </physiologicalReaction>
</comment>
<comment type="cofactor">
    <cofactor evidence="1">
        <name>[2Fe-2S] cluster</name>
        <dbReference type="ChEBI" id="CHEBI:190135"/>
    </cofactor>
    <text evidence="1">Binds 1 [2Fe-2S] cluster per subunit. This cluster acts as a Lewis acid cofactor.</text>
</comment>
<comment type="cofactor">
    <cofactor evidence="1">
        <name>Mg(2+)</name>
        <dbReference type="ChEBI" id="CHEBI:18420"/>
    </cofactor>
</comment>
<comment type="pathway">
    <text evidence="1">Amino-acid biosynthesis; L-isoleucine biosynthesis; L-isoleucine from 2-oxobutanoate: step 3/4.</text>
</comment>
<comment type="pathway">
    <text evidence="1">Amino-acid biosynthesis; L-valine biosynthesis; L-valine from pyruvate: step 3/4.</text>
</comment>
<comment type="subunit">
    <text evidence="1">Homodimer.</text>
</comment>
<comment type="similarity">
    <text evidence="1">Belongs to the IlvD/Edd family.</text>
</comment>
<dbReference type="EC" id="4.2.1.9" evidence="1"/>
<dbReference type="EMBL" id="CP000141">
    <property type="protein sequence ID" value="ABB16174.1"/>
    <property type="molecule type" value="Genomic_DNA"/>
</dbReference>
<dbReference type="RefSeq" id="WP_011343450.1">
    <property type="nucleotide sequence ID" value="NC_007503.1"/>
</dbReference>
<dbReference type="SMR" id="Q3AER0"/>
<dbReference type="FunCoup" id="Q3AER0">
    <property type="interactions" value="410"/>
</dbReference>
<dbReference type="STRING" id="246194.CHY_0516"/>
<dbReference type="KEGG" id="chy:CHY_0516"/>
<dbReference type="eggNOG" id="COG0129">
    <property type="taxonomic scope" value="Bacteria"/>
</dbReference>
<dbReference type="HOGENOM" id="CLU_014271_4_2_9"/>
<dbReference type="InParanoid" id="Q3AER0"/>
<dbReference type="OrthoDB" id="9807077at2"/>
<dbReference type="UniPathway" id="UPA00047">
    <property type="reaction ID" value="UER00057"/>
</dbReference>
<dbReference type="UniPathway" id="UPA00049">
    <property type="reaction ID" value="UER00061"/>
</dbReference>
<dbReference type="Proteomes" id="UP000002706">
    <property type="component" value="Chromosome"/>
</dbReference>
<dbReference type="GO" id="GO:0005829">
    <property type="term" value="C:cytosol"/>
    <property type="evidence" value="ECO:0007669"/>
    <property type="project" value="TreeGrafter"/>
</dbReference>
<dbReference type="GO" id="GO:0051537">
    <property type="term" value="F:2 iron, 2 sulfur cluster binding"/>
    <property type="evidence" value="ECO:0007669"/>
    <property type="project" value="UniProtKB-UniRule"/>
</dbReference>
<dbReference type="GO" id="GO:0004160">
    <property type="term" value="F:dihydroxy-acid dehydratase activity"/>
    <property type="evidence" value="ECO:0007669"/>
    <property type="project" value="UniProtKB-UniRule"/>
</dbReference>
<dbReference type="GO" id="GO:0000287">
    <property type="term" value="F:magnesium ion binding"/>
    <property type="evidence" value="ECO:0007669"/>
    <property type="project" value="UniProtKB-UniRule"/>
</dbReference>
<dbReference type="GO" id="GO:0009097">
    <property type="term" value="P:isoleucine biosynthetic process"/>
    <property type="evidence" value="ECO:0007669"/>
    <property type="project" value="UniProtKB-UniRule"/>
</dbReference>
<dbReference type="GO" id="GO:0009099">
    <property type="term" value="P:L-valine biosynthetic process"/>
    <property type="evidence" value="ECO:0007669"/>
    <property type="project" value="UniProtKB-UniRule"/>
</dbReference>
<dbReference type="FunFam" id="3.50.30.80:FF:000001">
    <property type="entry name" value="Dihydroxy-acid dehydratase"/>
    <property type="match status" value="1"/>
</dbReference>
<dbReference type="Gene3D" id="3.50.30.80">
    <property type="entry name" value="IlvD/EDD C-terminal domain-like"/>
    <property type="match status" value="1"/>
</dbReference>
<dbReference type="HAMAP" id="MF_00012">
    <property type="entry name" value="IlvD"/>
    <property type="match status" value="1"/>
</dbReference>
<dbReference type="InterPro" id="IPR042096">
    <property type="entry name" value="Dihydro-acid_dehy_C"/>
</dbReference>
<dbReference type="InterPro" id="IPR004404">
    <property type="entry name" value="DihydroxyA_deHydtase"/>
</dbReference>
<dbReference type="InterPro" id="IPR020558">
    <property type="entry name" value="DiOHA_6PGluconate_deHydtase_CS"/>
</dbReference>
<dbReference type="InterPro" id="IPR056740">
    <property type="entry name" value="ILV_EDD_C"/>
</dbReference>
<dbReference type="InterPro" id="IPR000581">
    <property type="entry name" value="ILV_EDD_N"/>
</dbReference>
<dbReference type="InterPro" id="IPR037237">
    <property type="entry name" value="IlvD/EDD_N"/>
</dbReference>
<dbReference type="NCBIfam" id="TIGR00110">
    <property type="entry name" value="ilvD"/>
    <property type="match status" value="1"/>
</dbReference>
<dbReference type="NCBIfam" id="NF002068">
    <property type="entry name" value="PRK00911.1"/>
    <property type="match status" value="1"/>
</dbReference>
<dbReference type="PANTHER" id="PTHR43661">
    <property type="entry name" value="D-XYLONATE DEHYDRATASE"/>
    <property type="match status" value="1"/>
</dbReference>
<dbReference type="PANTHER" id="PTHR43661:SF3">
    <property type="entry name" value="D-XYLONATE DEHYDRATASE YAGF-RELATED"/>
    <property type="match status" value="1"/>
</dbReference>
<dbReference type="Pfam" id="PF24877">
    <property type="entry name" value="ILV_EDD_C"/>
    <property type="match status" value="1"/>
</dbReference>
<dbReference type="Pfam" id="PF00920">
    <property type="entry name" value="ILVD_EDD_N"/>
    <property type="match status" value="1"/>
</dbReference>
<dbReference type="SUPFAM" id="SSF143975">
    <property type="entry name" value="IlvD/EDD N-terminal domain-like"/>
    <property type="match status" value="1"/>
</dbReference>
<dbReference type="SUPFAM" id="SSF52016">
    <property type="entry name" value="LeuD/IlvD-like"/>
    <property type="match status" value="1"/>
</dbReference>
<dbReference type="PROSITE" id="PS00886">
    <property type="entry name" value="ILVD_EDD_1"/>
    <property type="match status" value="1"/>
</dbReference>
<dbReference type="PROSITE" id="PS00887">
    <property type="entry name" value="ILVD_EDD_2"/>
    <property type="match status" value="1"/>
</dbReference>
<evidence type="ECO:0000255" key="1">
    <source>
        <dbReference type="HAMAP-Rule" id="MF_00012"/>
    </source>
</evidence>
<feature type="chain" id="PRO_0000225381" description="Dihydroxy-acid dehydratase">
    <location>
        <begin position="1"/>
        <end position="553"/>
    </location>
</feature>
<feature type="active site" description="Proton acceptor" evidence="1">
    <location>
        <position position="468"/>
    </location>
</feature>
<feature type="binding site" evidence="1">
    <location>
        <position position="78"/>
    </location>
    <ligand>
        <name>Mg(2+)</name>
        <dbReference type="ChEBI" id="CHEBI:18420"/>
    </ligand>
</feature>
<feature type="binding site" evidence="1">
    <location>
        <position position="119"/>
    </location>
    <ligand>
        <name>[2Fe-2S] cluster</name>
        <dbReference type="ChEBI" id="CHEBI:190135"/>
    </ligand>
</feature>
<feature type="binding site" evidence="1">
    <location>
        <position position="120"/>
    </location>
    <ligand>
        <name>Mg(2+)</name>
        <dbReference type="ChEBI" id="CHEBI:18420"/>
    </ligand>
</feature>
<feature type="binding site" description="via carbamate group" evidence="1">
    <location>
        <position position="121"/>
    </location>
    <ligand>
        <name>Mg(2+)</name>
        <dbReference type="ChEBI" id="CHEBI:18420"/>
    </ligand>
</feature>
<feature type="binding site" evidence="1">
    <location>
        <position position="191"/>
    </location>
    <ligand>
        <name>[2Fe-2S] cluster</name>
        <dbReference type="ChEBI" id="CHEBI:190135"/>
    </ligand>
</feature>
<feature type="binding site" evidence="1">
    <location>
        <position position="442"/>
    </location>
    <ligand>
        <name>Mg(2+)</name>
        <dbReference type="ChEBI" id="CHEBI:18420"/>
    </ligand>
</feature>
<feature type="modified residue" description="N6-carboxylysine" evidence="1">
    <location>
        <position position="121"/>
    </location>
</feature>
<keyword id="KW-0001">2Fe-2S</keyword>
<keyword id="KW-0028">Amino-acid biosynthesis</keyword>
<keyword id="KW-0100">Branched-chain amino acid biosynthesis</keyword>
<keyword id="KW-0408">Iron</keyword>
<keyword id="KW-0411">Iron-sulfur</keyword>
<keyword id="KW-0456">Lyase</keyword>
<keyword id="KW-0460">Magnesium</keyword>
<keyword id="KW-0479">Metal-binding</keyword>
<keyword id="KW-1185">Reference proteome</keyword>
<organism>
    <name type="scientific">Carboxydothermus hydrogenoformans (strain ATCC BAA-161 / DSM 6008 / Z-2901)</name>
    <dbReference type="NCBI Taxonomy" id="246194"/>
    <lineage>
        <taxon>Bacteria</taxon>
        <taxon>Bacillati</taxon>
        <taxon>Bacillota</taxon>
        <taxon>Clostridia</taxon>
        <taxon>Thermoanaerobacterales</taxon>
        <taxon>Thermoanaerobacteraceae</taxon>
        <taxon>Carboxydothermus</taxon>
    </lineage>
</organism>
<accession>Q3AER0</accession>
<gene>
    <name evidence="1" type="primary">ilvD</name>
    <name type="ordered locus">CHY_0516</name>
</gene>
<name>ILVD_CARHZ</name>
<sequence length="553" mass="58841">MPSHLIKSGISKAPHRSLLKALGITDNELKRPFIGVVHSFSEIVPGHVHLRTVVEAVKAGVRTAGGVPFELPVIGVCDGIAMNHEGMKYSLASRELIADSVEVMVKAHQFDALVFVPNCDKIVPGMLIAAMRLNLPAIFVSGGPMLAGRVRGKSVSLSNVFEGVGAVAAGLMSEEELLEYENYACPGCGSCAGMFTANSMNCLTEAIGMALPGNGTIPAVYAERLRLAKLSGEKVMELLSQNIRPRDIFTRESLLNGLAVDMALGCSTNTVLHLAAVAYEAGVEFDLNLVNEVSERTPNLCRLSPAGPHHMEDLYFAGGIPAVMKELSKKGLIREDLLTVSGKTVGENLKNAVNKNPEVIRPIDNPYSETGGLAILFGTLAPRGAVVKKSAVLPEMLTHTGPARVFDSEEDATTAILTGQIKKGDVVVIRYEGPKGGPGMREMLTPTSALAGMGLDKDVALITDGRFSGATRGAAIGHVSPEGYEGGPIALVREGDLIKIDIPGQRLDLLVSEEELNQRKARLQIPEPKIKEGYLARYQKLVSSANLGAVFLK</sequence>
<protein>
    <recommendedName>
        <fullName evidence="1">Dihydroxy-acid dehydratase</fullName>
        <shortName evidence="1">DAD</shortName>
        <ecNumber evidence="1">4.2.1.9</ecNumber>
    </recommendedName>
</protein>
<proteinExistence type="inferred from homology"/>
<reference key="1">
    <citation type="journal article" date="2005" name="PLoS Genet.">
        <title>Life in hot carbon monoxide: the complete genome sequence of Carboxydothermus hydrogenoformans Z-2901.</title>
        <authorList>
            <person name="Wu M."/>
            <person name="Ren Q."/>
            <person name="Durkin A.S."/>
            <person name="Daugherty S.C."/>
            <person name="Brinkac L.M."/>
            <person name="Dodson R.J."/>
            <person name="Madupu R."/>
            <person name="Sullivan S.A."/>
            <person name="Kolonay J.F."/>
            <person name="Nelson W.C."/>
            <person name="Tallon L.J."/>
            <person name="Jones K.M."/>
            <person name="Ulrich L.E."/>
            <person name="Gonzalez J.M."/>
            <person name="Zhulin I.B."/>
            <person name="Robb F.T."/>
            <person name="Eisen J.A."/>
        </authorList>
    </citation>
    <scope>NUCLEOTIDE SEQUENCE [LARGE SCALE GENOMIC DNA]</scope>
    <source>
        <strain>ATCC BAA-161 / DSM 6008 / Z-2901</strain>
    </source>
</reference>